<dbReference type="EMBL" id="CP000647">
    <property type="protein sequence ID" value="ABR77743.1"/>
    <property type="molecule type" value="Genomic_DNA"/>
</dbReference>
<dbReference type="RefSeq" id="WP_002910898.1">
    <property type="nucleotide sequence ID" value="NC_009648.1"/>
</dbReference>
<dbReference type="SMR" id="A6TAX2"/>
<dbReference type="STRING" id="272620.KPN_02317"/>
<dbReference type="PaxDb" id="272620-KPN_02317"/>
<dbReference type="EnsemblBacteria" id="ABR77743">
    <property type="protein sequence ID" value="ABR77743"/>
    <property type="gene ID" value="KPN_02317"/>
</dbReference>
<dbReference type="KEGG" id="kpn:KPN_02317"/>
<dbReference type="HOGENOM" id="CLU_155118_1_0_6"/>
<dbReference type="Proteomes" id="UP000000265">
    <property type="component" value="Chromosome"/>
</dbReference>
<dbReference type="Gene3D" id="3.10.510.20">
    <property type="entry name" value="YcgL domain"/>
    <property type="match status" value="1"/>
</dbReference>
<dbReference type="HAMAP" id="MF_01866">
    <property type="entry name" value="UPF0745"/>
    <property type="match status" value="1"/>
</dbReference>
<dbReference type="InterPro" id="IPR038068">
    <property type="entry name" value="YcgL-like_sf"/>
</dbReference>
<dbReference type="InterPro" id="IPR027354">
    <property type="entry name" value="YcgL_dom"/>
</dbReference>
<dbReference type="PANTHER" id="PTHR38109">
    <property type="entry name" value="PROTEIN YCGL"/>
    <property type="match status" value="1"/>
</dbReference>
<dbReference type="PANTHER" id="PTHR38109:SF1">
    <property type="entry name" value="PROTEIN YCGL"/>
    <property type="match status" value="1"/>
</dbReference>
<dbReference type="Pfam" id="PF05166">
    <property type="entry name" value="YcgL"/>
    <property type="match status" value="1"/>
</dbReference>
<dbReference type="SUPFAM" id="SSF160191">
    <property type="entry name" value="YcgL-like"/>
    <property type="match status" value="1"/>
</dbReference>
<dbReference type="PROSITE" id="PS51648">
    <property type="entry name" value="YCGL"/>
    <property type="match status" value="1"/>
</dbReference>
<name>Y2282_KLEP7</name>
<evidence type="ECO:0000255" key="1">
    <source>
        <dbReference type="HAMAP-Rule" id="MF_01866"/>
    </source>
</evidence>
<proteinExistence type="inferred from homology"/>
<feature type="chain" id="PRO_0000375317" description="YcgL domain-containing protein KPN78578_22820">
    <location>
        <begin position="1"/>
        <end position="93"/>
    </location>
</feature>
<feature type="domain" description="YcgL" evidence="1">
    <location>
        <begin position="1"/>
        <end position="85"/>
    </location>
</feature>
<gene>
    <name type="ordered locus">KPN78578_22820</name>
    <name type="ORF">KPN_02317</name>
</gene>
<reference key="1">
    <citation type="submission" date="2006-09" db="EMBL/GenBank/DDBJ databases">
        <authorList>
            <consortium name="The Klebsiella pneumonia Genome Sequencing Project"/>
            <person name="McClelland M."/>
            <person name="Sanderson E.K."/>
            <person name="Spieth J."/>
            <person name="Clifton W.S."/>
            <person name="Latreille P."/>
            <person name="Sabo A."/>
            <person name="Pepin K."/>
            <person name="Bhonagiri V."/>
            <person name="Porwollik S."/>
            <person name="Ali J."/>
            <person name="Wilson R.K."/>
        </authorList>
    </citation>
    <scope>NUCLEOTIDE SEQUENCE [LARGE SCALE GENOMIC DNA]</scope>
    <source>
        <strain>ATCC 700721 / MGH 78578</strain>
    </source>
</reference>
<organism>
    <name type="scientific">Klebsiella pneumoniae subsp. pneumoniae (strain ATCC 700721 / MGH 78578)</name>
    <dbReference type="NCBI Taxonomy" id="272620"/>
    <lineage>
        <taxon>Bacteria</taxon>
        <taxon>Pseudomonadati</taxon>
        <taxon>Pseudomonadota</taxon>
        <taxon>Gammaproteobacteria</taxon>
        <taxon>Enterobacterales</taxon>
        <taxon>Enterobacteriaceae</taxon>
        <taxon>Klebsiella/Raoultella group</taxon>
        <taxon>Klebsiella</taxon>
        <taxon>Klebsiella pneumoniae complex</taxon>
    </lineage>
</organism>
<sequence length="93" mass="10824">MFCVIYRSTKREQTYLYVEKKDDFSRVPDELMRSFGTPQMAMLLPLDGRKKLVNADLEKVKQALSEQGYYLQLPPPSENLLKKHLAEQGKQSD</sequence>
<accession>A6TAX2</accession>
<protein>
    <recommendedName>
        <fullName evidence="1">YcgL domain-containing protein KPN78578_22820</fullName>
    </recommendedName>
</protein>